<reference key="1">
    <citation type="journal article" date="1991" name="J. Biol. Chem.">
        <title>A collagen-binding protein in the endoplasmic reticulum of myoblasts exhibits relationship with serine protease inhibitors.</title>
        <authorList>
            <person name="Clarke E.P."/>
            <person name="Cates G.A."/>
            <person name="Ball E.H."/>
            <person name="Sanwal B.D."/>
        </authorList>
    </citation>
    <scope>NUCLEOTIDE SEQUENCE [MRNA]</scope>
    <scope>PROTEIN SEQUENCE OF 18-41; 167-192 AND 339-352</scope>
</reference>
<reference key="2">
    <citation type="journal article" date="1990" name="Arch. Biochem. Biophys.">
        <title>Partial characterization of a collagen-binding, differentiation-related glycoprotein from skeletal myoblasts.</title>
        <authorList>
            <person name="Nanden D."/>
            <person name="Cates G.A."/>
            <person name="Ball E.H."/>
            <person name="Sanwal B.D."/>
        </authorList>
    </citation>
    <scope>PROTEIN SEQUENCE OF 18-33</scope>
</reference>
<accession>P29457</accession>
<feature type="signal peptide" evidence="5 6">
    <location>
        <begin position="1"/>
        <end position="17"/>
    </location>
</feature>
<feature type="chain" id="PRO_0000032518" description="Serpin H1">
    <location>
        <begin position="18"/>
        <end position="417"/>
    </location>
</feature>
<feature type="short sequence motif" description="Prevents secretion from ER" evidence="7">
    <location>
        <begin position="414"/>
        <end position="417"/>
    </location>
</feature>
<feature type="site" description="Reactive bond homolog" evidence="1">
    <location>
        <begin position="376"/>
        <end position="377"/>
    </location>
</feature>
<feature type="modified residue" description="N6-succinyllysine" evidence="2">
    <location>
        <position position="93"/>
    </location>
</feature>
<feature type="modified residue" description="Phosphoserine" evidence="3">
    <location>
        <position position="140"/>
    </location>
</feature>
<feature type="modified residue" description="N6-acetyllysine" evidence="2">
    <location>
        <position position="206"/>
    </location>
</feature>
<feature type="modified residue" description="N6-succinyllysine" evidence="2">
    <location>
        <position position="295"/>
    </location>
</feature>
<feature type="modified residue" description="N6-acetyllysine" evidence="2">
    <location>
        <position position="318"/>
    </location>
</feature>
<feature type="glycosylation site" description="N-linked (GlcNAc...) asparagine" evidence="4">
    <location>
        <position position="119"/>
    </location>
</feature>
<feature type="glycosylation site" description="N-linked (GlcNAc...) asparagine" evidence="4">
    <location>
        <position position="124"/>
    </location>
</feature>
<feature type="glycosylation site" description="N-linked (GlcNAc...) asparagine" evidence="4">
    <location>
        <position position="394"/>
    </location>
</feature>
<evidence type="ECO:0000250" key="1"/>
<evidence type="ECO:0000250" key="2">
    <source>
        <dbReference type="UniProtKB" id="P19324"/>
    </source>
</evidence>
<evidence type="ECO:0000250" key="3">
    <source>
        <dbReference type="UniProtKB" id="P50454"/>
    </source>
</evidence>
<evidence type="ECO:0000255" key="4"/>
<evidence type="ECO:0000269" key="5">
    <source>
    </source>
</evidence>
<evidence type="ECO:0000269" key="6">
    <source>
    </source>
</evidence>
<evidence type="ECO:0000305" key="7"/>
<organism>
    <name type="scientific">Rattus norvegicus</name>
    <name type="common">Rat</name>
    <dbReference type="NCBI Taxonomy" id="10116"/>
    <lineage>
        <taxon>Eukaryota</taxon>
        <taxon>Metazoa</taxon>
        <taxon>Chordata</taxon>
        <taxon>Craniata</taxon>
        <taxon>Vertebrata</taxon>
        <taxon>Euteleostomi</taxon>
        <taxon>Mammalia</taxon>
        <taxon>Eutheria</taxon>
        <taxon>Euarchontoglires</taxon>
        <taxon>Glires</taxon>
        <taxon>Rodentia</taxon>
        <taxon>Myomorpha</taxon>
        <taxon>Muroidea</taxon>
        <taxon>Muridae</taxon>
        <taxon>Murinae</taxon>
        <taxon>Rattus</taxon>
    </lineage>
</organism>
<name>SERPH_RAT</name>
<comment type="function">
    <text>Binds specifically to collagen. Could be involved as a chaperone in the biosynthetic pathway of collagen.</text>
</comment>
<comment type="subcellular location">
    <subcellularLocation>
        <location>Endoplasmic reticulum lumen</location>
    </subcellularLocation>
</comment>
<comment type="induction">
    <text>By heat shock and retinoic acid.</text>
</comment>
<comment type="similarity">
    <text evidence="7">Belongs to the serpin family.</text>
</comment>
<sequence length="417" mass="46518">MRSLLLGTLCLLAVALAAEVKKPVEAAAPGTAEKLSSKATTLAERSTGLAFSLYQAMAKDQAVENILLSPLVVASSLGLVSLGGKATTASQAKAVLSAEKLRDEEVHTGLGELVRSLSNSTARNVTWKLGSRLYGPSSVSFADDFVRSSKQHYNCEHSKINFRDKRSALQSINEWASQTTDGKLPEVTKDVERTDGALLVNAMFFKPHWDEKFHHKMVDNRGFMVTRSYTVGVTMMHRTGLYNYYDDEKEKLQLVEMPLAHKLSSLIILMPHHVEPLERLEKLLTKEQLKTWMGKMQKKAVAISLPKGVVEVTHDLQKHLAGLGLTEAIDKNKADLSRMSGKKDLYLASVFHATAFEWDTEGNPFDQDIYGREELRSPKLFYADHPFIFLVRDNQSGSLLFIGRLVRPKGDKMRDEL</sequence>
<keyword id="KW-0007">Acetylation</keyword>
<keyword id="KW-0143">Chaperone</keyword>
<keyword id="KW-0903">Direct protein sequencing</keyword>
<keyword id="KW-0256">Endoplasmic reticulum</keyword>
<keyword id="KW-0325">Glycoprotein</keyword>
<keyword id="KW-0597">Phosphoprotein</keyword>
<keyword id="KW-1185">Reference proteome</keyword>
<keyword id="KW-0732">Signal</keyword>
<keyword id="KW-0346">Stress response</keyword>
<proteinExistence type="evidence at protein level"/>
<gene>
    <name type="primary">Serpinh1</name>
    <name type="synonym">Cbp1</name>
    <name type="synonym">Hsp47</name>
</gene>
<dbReference type="EMBL" id="M69246">
    <property type="protein sequence ID" value="AAA41270.1"/>
    <property type="molecule type" value="mRNA"/>
</dbReference>
<dbReference type="PIR" id="A40968">
    <property type="entry name" value="A40968"/>
</dbReference>
<dbReference type="RefSeq" id="NP_058869.1">
    <property type="nucleotide sequence ID" value="NM_017173.1"/>
</dbReference>
<dbReference type="SMR" id="P29457"/>
<dbReference type="BioGRID" id="248001">
    <property type="interactions" value="4"/>
</dbReference>
<dbReference type="ELM" id="P29457"/>
<dbReference type="FunCoup" id="P29457">
    <property type="interactions" value="916"/>
</dbReference>
<dbReference type="IntAct" id="P29457">
    <property type="interactions" value="1"/>
</dbReference>
<dbReference type="STRING" id="10116.ENSRNOP00000022983"/>
<dbReference type="MEROPS" id="I04.035"/>
<dbReference type="GlyCosmos" id="P29457">
    <property type="glycosylation" value="3 sites, No reported glycans"/>
</dbReference>
<dbReference type="GlyGen" id="P29457">
    <property type="glycosylation" value="3 sites"/>
</dbReference>
<dbReference type="iPTMnet" id="P29457"/>
<dbReference type="PhosphoSitePlus" id="P29457"/>
<dbReference type="SwissPalm" id="P29457"/>
<dbReference type="PaxDb" id="10116-ENSRNOP00000022983"/>
<dbReference type="GeneID" id="29345"/>
<dbReference type="KEGG" id="rno:29345"/>
<dbReference type="UCSC" id="RGD:69302">
    <property type="organism name" value="rat"/>
</dbReference>
<dbReference type="AGR" id="RGD:69302"/>
<dbReference type="CTD" id="871"/>
<dbReference type="RGD" id="69302">
    <property type="gene designation" value="Serpinh1"/>
</dbReference>
<dbReference type="eggNOG" id="KOG2392">
    <property type="taxonomic scope" value="Eukaryota"/>
</dbReference>
<dbReference type="InParanoid" id="P29457"/>
<dbReference type="PhylomeDB" id="P29457"/>
<dbReference type="Reactome" id="R-RNO-1650814">
    <property type="pathway name" value="Collagen biosynthesis and modifying enzymes"/>
</dbReference>
<dbReference type="PRO" id="PR:P29457"/>
<dbReference type="Proteomes" id="UP000002494">
    <property type="component" value="Unplaced"/>
</dbReference>
<dbReference type="GO" id="GO:0005737">
    <property type="term" value="C:cytoplasm"/>
    <property type="evidence" value="ECO:0000266"/>
    <property type="project" value="RGD"/>
</dbReference>
<dbReference type="GO" id="GO:0005783">
    <property type="term" value="C:endoplasmic reticulum"/>
    <property type="evidence" value="ECO:0000266"/>
    <property type="project" value="RGD"/>
</dbReference>
<dbReference type="GO" id="GO:0005788">
    <property type="term" value="C:endoplasmic reticulum lumen"/>
    <property type="evidence" value="ECO:0007669"/>
    <property type="project" value="UniProtKB-SubCell"/>
</dbReference>
<dbReference type="GO" id="GO:0005793">
    <property type="term" value="C:endoplasmic reticulum-Golgi intermediate compartment"/>
    <property type="evidence" value="ECO:0000266"/>
    <property type="project" value="RGD"/>
</dbReference>
<dbReference type="GO" id="GO:0005615">
    <property type="term" value="C:extracellular space"/>
    <property type="evidence" value="ECO:0007669"/>
    <property type="project" value="InterPro"/>
</dbReference>
<dbReference type="GO" id="GO:0045121">
    <property type="term" value="C:membrane raft"/>
    <property type="evidence" value="ECO:0000266"/>
    <property type="project" value="RGD"/>
</dbReference>
<dbReference type="GO" id="GO:0005518">
    <property type="term" value="F:collagen binding"/>
    <property type="evidence" value="ECO:0000304"/>
    <property type="project" value="RGD"/>
</dbReference>
<dbReference type="GO" id="GO:0004867">
    <property type="term" value="F:serine-type endopeptidase inhibitor activity"/>
    <property type="evidence" value="ECO:0000318"/>
    <property type="project" value="GO_Central"/>
</dbReference>
<dbReference type="GO" id="GO:0051082">
    <property type="term" value="F:unfolded protein binding"/>
    <property type="evidence" value="ECO:0000266"/>
    <property type="project" value="RGD"/>
</dbReference>
<dbReference type="GO" id="GO:0003433">
    <property type="term" value="P:chondrocyte development involved in endochondral bone morphogenesis"/>
    <property type="evidence" value="ECO:0000266"/>
    <property type="project" value="RGD"/>
</dbReference>
<dbReference type="GO" id="GO:0032964">
    <property type="term" value="P:collagen biosynthetic process"/>
    <property type="evidence" value="ECO:0000266"/>
    <property type="project" value="RGD"/>
</dbReference>
<dbReference type="GO" id="GO:0030199">
    <property type="term" value="P:collagen fibril organization"/>
    <property type="evidence" value="ECO:0000266"/>
    <property type="project" value="RGD"/>
</dbReference>
<dbReference type="GO" id="GO:0051604">
    <property type="term" value="P:protein maturation"/>
    <property type="evidence" value="ECO:0000266"/>
    <property type="project" value="RGD"/>
</dbReference>
<dbReference type="CDD" id="cd02046">
    <property type="entry name" value="serpinH1_CBP1"/>
    <property type="match status" value="1"/>
</dbReference>
<dbReference type="FunFam" id="2.30.39.10:FF:000072">
    <property type="entry name" value="Serpin peptidase inhibitor, clade H (Heat shock protein 47), member 1, (Collagen binding protein 1)"/>
    <property type="match status" value="1"/>
</dbReference>
<dbReference type="FunFam" id="3.30.497.10:FF:000034">
    <property type="entry name" value="SERPINH1 isoform 13"/>
    <property type="match status" value="1"/>
</dbReference>
<dbReference type="Gene3D" id="2.30.39.10">
    <property type="entry name" value="Alpha-1-antitrypsin, domain 1"/>
    <property type="match status" value="1"/>
</dbReference>
<dbReference type="Gene3D" id="3.30.497.10">
    <property type="entry name" value="Antithrombin, subunit I, domain 2"/>
    <property type="match status" value="1"/>
</dbReference>
<dbReference type="InterPro" id="IPR023795">
    <property type="entry name" value="Serpin_CS"/>
</dbReference>
<dbReference type="InterPro" id="IPR023796">
    <property type="entry name" value="Serpin_dom"/>
</dbReference>
<dbReference type="InterPro" id="IPR000215">
    <property type="entry name" value="Serpin_fam"/>
</dbReference>
<dbReference type="InterPro" id="IPR033830">
    <property type="entry name" value="Serpin_H1_serpin_dom"/>
</dbReference>
<dbReference type="InterPro" id="IPR036186">
    <property type="entry name" value="Serpin_sf"/>
</dbReference>
<dbReference type="InterPro" id="IPR042178">
    <property type="entry name" value="Serpin_sf_1"/>
</dbReference>
<dbReference type="InterPro" id="IPR042185">
    <property type="entry name" value="Serpin_sf_2"/>
</dbReference>
<dbReference type="PANTHER" id="PTHR11461">
    <property type="entry name" value="SERINE PROTEASE INHIBITOR, SERPIN"/>
    <property type="match status" value="1"/>
</dbReference>
<dbReference type="PANTHER" id="PTHR11461:SF27">
    <property type="entry name" value="SERPIN H1"/>
    <property type="match status" value="1"/>
</dbReference>
<dbReference type="Pfam" id="PF00079">
    <property type="entry name" value="Serpin"/>
    <property type="match status" value="1"/>
</dbReference>
<dbReference type="SMART" id="SM00093">
    <property type="entry name" value="SERPIN"/>
    <property type="match status" value="1"/>
</dbReference>
<dbReference type="SUPFAM" id="SSF56574">
    <property type="entry name" value="Serpins"/>
    <property type="match status" value="1"/>
</dbReference>
<dbReference type="PROSITE" id="PS00014">
    <property type="entry name" value="ER_TARGET"/>
    <property type="match status" value="1"/>
</dbReference>
<dbReference type="PROSITE" id="PS00284">
    <property type="entry name" value="SERPIN"/>
    <property type="match status" value="1"/>
</dbReference>
<protein>
    <recommendedName>
        <fullName>Serpin H1</fullName>
    </recommendedName>
    <alternativeName>
        <fullName>47 kDa heat shock protein</fullName>
    </alternativeName>
    <alternativeName>
        <fullName>Collagen-binding protein</fullName>
        <shortName>Colligin</shortName>
    </alternativeName>
    <alternativeName>
        <fullName>GP46</fullName>
    </alternativeName>
</protein>